<proteinExistence type="inferred from homology"/>
<organism>
    <name type="scientific">Scheffersomyces stipitis (strain ATCC 58785 / CBS 6054 / NBRC 10063 / NRRL Y-11545)</name>
    <name type="common">Yeast</name>
    <name type="synonym">Pichia stipitis</name>
    <dbReference type="NCBI Taxonomy" id="322104"/>
    <lineage>
        <taxon>Eukaryota</taxon>
        <taxon>Fungi</taxon>
        <taxon>Dikarya</taxon>
        <taxon>Ascomycota</taxon>
        <taxon>Saccharomycotina</taxon>
        <taxon>Pichiomycetes</taxon>
        <taxon>Debaryomycetaceae</taxon>
        <taxon>Scheffersomyces</taxon>
    </lineage>
</organism>
<accession>A3LUB9</accession>
<feature type="chain" id="PRO_0000312950" description="Serine/threonine-protein kinase SSN3">
    <location>
        <begin position="1"/>
        <end position="431"/>
    </location>
</feature>
<feature type="domain" description="Protein kinase" evidence="2">
    <location>
        <begin position="27"/>
        <end position="355"/>
    </location>
</feature>
<feature type="region of interest" description="Disordered" evidence="4">
    <location>
        <begin position="397"/>
        <end position="431"/>
    </location>
</feature>
<feature type="compositionally biased region" description="Low complexity" evidence="4">
    <location>
        <begin position="407"/>
        <end position="424"/>
    </location>
</feature>
<feature type="active site" description="Proton acceptor" evidence="2 3">
    <location>
        <position position="174"/>
    </location>
</feature>
<feature type="binding site" evidence="2">
    <location>
        <begin position="33"/>
        <end position="41"/>
    </location>
    <ligand>
        <name>ATP</name>
        <dbReference type="ChEBI" id="CHEBI:30616"/>
    </ligand>
</feature>
<feature type="binding site" evidence="2">
    <location>
        <position position="59"/>
    </location>
    <ligand>
        <name>ATP</name>
        <dbReference type="ChEBI" id="CHEBI:30616"/>
    </ligand>
</feature>
<evidence type="ECO:0000250" key="1"/>
<evidence type="ECO:0000255" key="2">
    <source>
        <dbReference type="PROSITE-ProRule" id="PRU00159"/>
    </source>
</evidence>
<evidence type="ECO:0000255" key="3">
    <source>
        <dbReference type="PROSITE-ProRule" id="PRU10027"/>
    </source>
</evidence>
<evidence type="ECO:0000256" key="4">
    <source>
        <dbReference type="SAM" id="MobiDB-lite"/>
    </source>
</evidence>
<evidence type="ECO:0000305" key="5"/>
<keyword id="KW-0010">Activator</keyword>
<keyword id="KW-0067">ATP-binding</keyword>
<keyword id="KW-0418">Kinase</keyword>
<keyword id="KW-0460">Magnesium</keyword>
<keyword id="KW-0479">Metal-binding</keyword>
<keyword id="KW-0547">Nucleotide-binding</keyword>
<keyword id="KW-0539">Nucleus</keyword>
<keyword id="KW-1185">Reference proteome</keyword>
<keyword id="KW-0678">Repressor</keyword>
<keyword id="KW-0723">Serine/threonine-protein kinase</keyword>
<keyword id="KW-0804">Transcription</keyword>
<keyword id="KW-0805">Transcription regulation</keyword>
<keyword id="KW-0808">Transferase</keyword>
<protein>
    <recommendedName>
        <fullName>Serine/threonine-protein kinase SSN3</fullName>
        <ecNumber>2.7.11.22</ecNumber>
        <ecNumber>2.7.11.23</ecNumber>
    </recommendedName>
    <alternativeName>
        <fullName>Cyclin-dependent kinase 8</fullName>
    </alternativeName>
</protein>
<comment type="function">
    <text evidence="1">Component of the srb8-11 complex. The srb8-11 complex is a regulatory module of the Mediator complex which is itself dependent transcription. The srb8-11 complex may be involved in the transcriptional repression of a subset of genes regulated by Mediator. It may inhibit the association of the Mediator complex with RNA polymerase II to form the holoenzyme complex. The srb8-11 complex phosphorylates the C-terminal domain (CTD) of the largest subunit of RNA polymerase II (By similarity).</text>
</comment>
<comment type="catalytic activity">
    <reaction>
        <text>L-seryl-[protein] + ATP = O-phospho-L-seryl-[protein] + ADP + H(+)</text>
        <dbReference type="Rhea" id="RHEA:17989"/>
        <dbReference type="Rhea" id="RHEA-COMP:9863"/>
        <dbReference type="Rhea" id="RHEA-COMP:11604"/>
        <dbReference type="ChEBI" id="CHEBI:15378"/>
        <dbReference type="ChEBI" id="CHEBI:29999"/>
        <dbReference type="ChEBI" id="CHEBI:30616"/>
        <dbReference type="ChEBI" id="CHEBI:83421"/>
        <dbReference type="ChEBI" id="CHEBI:456216"/>
        <dbReference type="EC" id="2.7.11.22"/>
    </reaction>
</comment>
<comment type="catalytic activity">
    <reaction>
        <text>L-threonyl-[protein] + ATP = O-phospho-L-threonyl-[protein] + ADP + H(+)</text>
        <dbReference type="Rhea" id="RHEA:46608"/>
        <dbReference type="Rhea" id="RHEA-COMP:11060"/>
        <dbReference type="Rhea" id="RHEA-COMP:11605"/>
        <dbReference type="ChEBI" id="CHEBI:15378"/>
        <dbReference type="ChEBI" id="CHEBI:30013"/>
        <dbReference type="ChEBI" id="CHEBI:30616"/>
        <dbReference type="ChEBI" id="CHEBI:61977"/>
        <dbReference type="ChEBI" id="CHEBI:456216"/>
        <dbReference type="EC" id="2.7.11.22"/>
    </reaction>
</comment>
<comment type="catalytic activity">
    <reaction>
        <text>[DNA-directed RNA polymerase] + ATP = phospho-[DNA-directed RNA polymerase] + ADP + H(+)</text>
        <dbReference type="Rhea" id="RHEA:10216"/>
        <dbReference type="Rhea" id="RHEA-COMP:11321"/>
        <dbReference type="Rhea" id="RHEA-COMP:11322"/>
        <dbReference type="ChEBI" id="CHEBI:15378"/>
        <dbReference type="ChEBI" id="CHEBI:30616"/>
        <dbReference type="ChEBI" id="CHEBI:43176"/>
        <dbReference type="ChEBI" id="CHEBI:68546"/>
        <dbReference type="ChEBI" id="CHEBI:456216"/>
        <dbReference type="EC" id="2.7.11.23"/>
    </reaction>
</comment>
<comment type="cofactor">
    <cofactor evidence="1">
        <name>Mg(2+)</name>
        <dbReference type="ChEBI" id="CHEBI:18420"/>
    </cofactor>
</comment>
<comment type="subunit">
    <text evidence="1">Component of the srb8-11 complex, a regulatory module of the Mediator complex.</text>
</comment>
<comment type="subcellular location">
    <subcellularLocation>
        <location evidence="5">Nucleus</location>
    </subcellularLocation>
</comment>
<comment type="similarity">
    <text evidence="5">Belongs to the protein kinase superfamily. CMGC Ser/Thr protein kinase family. CDC2/CDKX subfamily.</text>
</comment>
<reference key="1">
    <citation type="journal article" date="2007" name="Nat. Biotechnol.">
        <title>Genome sequence of the lignocellulose-bioconverting and xylose-fermenting yeast Pichia stipitis.</title>
        <authorList>
            <person name="Jeffries T.W."/>
            <person name="Grigoriev I.V."/>
            <person name="Grimwood J."/>
            <person name="Laplaza J.M."/>
            <person name="Aerts A."/>
            <person name="Salamov A."/>
            <person name="Schmutz J."/>
            <person name="Lindquist E."/>
            <person name="Dehal P."/>
            <person name="Shapiro H."/>
            <person name="Jin Y.-S."/>
            <person name="Passoth V."/>
            <person name="Richardson P.M."/>
        </authorList>
    </citation>
    <scope>NUCLEOTIDE SEQUENCE [LARGE SCALE GENOMIC DNA]</scope>
    <source>
        <strain>ATCC 58785 / CBS 6054 / NBRC 10063 / NRRL Y-11545</strain>
    </source>
</reference>
<gene>
    <name type="primary">SSN3</name>
    <name type="synonym">CDK8</name>
    <name type="ORF">PICST_89025</name>
</gene>
<name>SSN3_PICST</name>
<dbReference type="EC" id="2.7.11.22"/>
<dbReference type="EC" id="2.7.11.23"/>
<dbReference type="EMBL" id="CP000498">
    <property type="protein sequence ID" value="ABN66561.2"/>
    <property type="molecule type" value="Genomic_DNA"/>
</dbReference>
<dbReference type="RefSeq" id="XP_001384590.2">
    <property type="nucleotide sequence ID" value="XM_001384553.1"/>
</dbReference>
<dbReference type="SMR" id="A3LUB9"/>
<dbReference type="FunCoup" id="A3LUB9">
    <property type="interactions" value="1139"/>
</dbReference>
<dbReference type="STRING" id="322104.A3LUB9"/>
<dbReference type="GeneID" id="4838657"/>
<dbReference type="KEGG" id="pic:PICST_89025"/>
<dbReference type="eggNOG" id="KOG0666">
    <property type="taxonomic scope" value="Eukaryota"/>
</dbReference>
<dbReference type="HOGENOM" id="CLU_000288_181_6_1"/>
<dbReference type="InParanoid" id="A3LUB9"/>
<dbReference type="OMA" id="YFKNGGP"/>
<dbReference type="OrthoDB" id="6284126at2759"/>
<dbReference type="Proteomes" id="UP000002258">
    <property type="component" value="Chromosome 4"/>
</dbReference>
<dbReference type="GO" id="GO:1990508">
    <property type="term" value="C:CKM complex"/>
    <property type="evidence" value="ECO:0007669"/>
    <property type="project" value="EnsemblFungi"/>
</dbReference>
<dbReference type="GO" id="GO:0016592">
    <property type="term" value="C:mediator complex"/>
    <property type="evidence" value="ECO:0007669"/>
    <property type="project" value="EnsemblFungi"/>
</dbReference>
<dbReference type="GO" id="GO:0005524">
    <property type="term" value="F:ATP binding"/>
    <property type="evidence" value="ECO:0007669"/>
    <property type="project" value="UniProtKB-KW"/>
</dbReference>
<dbReference type="GO" id="GO:0004693">
    <property type="term" value="F:cyclin-dependent protein serine/threonine kinase activity"/>
    <property type="evidence" value="ECO:0007669"/>
    <property type="project" value="UniProtKB-EC"/>
</dbReference>
<dbReference type="GO" id="GO:0046872">
    <property type="term" value="F:metal ion binding"/>
    <property type="evidence" value="ECO:0007669"/>
    <property type="project" value="UniProtKB-KW"/>
</dbReference>
<dbReference type="GO" id="GO:0106310">
    <property type="term" value="F:protein serine kinase activity"/>
    <property type="evidence" value="ECO:0007669"/>
    <property type="project" value="RHEA"/>
</dbReference>
<dbReference type="GO" id="GO:0008353">
    <property type="term" value="F:RNA polymerase II CTD heptapeptide repeat kinase activity"/>
    <property type="evidence" value="ECO:0007669"/>
    <property type="project" value="UniProtKB-EC"/>
</dbReference>
<dbReference type="GO" id="GO:0060258">
    <property type="term" value="P:negative regulation of filamentous growth"/>
    <property type="evidence" value="ECO:0007669"/>
    <property type="project" value="EnsemblFungi"/>
</dbReference>
<dbReference type="GO" id="GO:0000122">
    <property type="term" value="P:negative regulation of transcription by RNA polymerase II"/>
    <property type="evidence" value="ECO:0007669"/>
    <property type="project" value="EnsemblFungi"/>
</dbReference>
<dbReference type="GO" id="GO:0070481">
    <property type="term" value="P:nuclear-transcribed mRNA catabolic process, non-stop decay"/>
    <property type="evidence" value="ECO:0007669"/>
    <property type="project" value="EnsemblFungi"/>
</dbReference>
<dbReference type="GO" id="GO:0045944">
    <property type="term" value="P:positive regulation of transcription by RNA polymerase II"/>
    <property type="evidence" value="ECO:0007669"/>
    <property type="project" value="EnsemblFungi"/>
</dbReference>
<dbReference type="GO" id="GO:0031648">
    <property type="term" value="P:protein destabilization"/>
    <property type="evidence" value="ECO:0007669"/>
    <property type="project" value="EnsemblFungi"/>
</dbReference>
<dbReference type="CDD" id="cd07842">
    <property type="entry name" value="STKc_CDK8_like"/>
    <property type="match status" value="1"/>
</dbReference>
<dbReference type="FunFam" id="1.10.510.10:FF:000408">
    <property type="entry name" value="Serine/threonine-protein kinase SSN3"/>
    <property type="match status" value="1"/>
</dbReference>
<dbReference type="Gene3D" id="3.30.200.20">
    <property type="entry name" value="Phosphorylase Kinase, domain 1"/>
    <property type="match status" value="1"/>
</dbReference>
<dbReference type="Gene3D" id="1.10.510.10">
    <property type="entry name" value="Transferase(Phosphotransferase) domain 1"/>
    <property type="match status" value="1"/>
</dbReference>
<dbReference type="InterPro" id="IPR050108">
    <property type="entry name" value="CDK"/>
</dbReference>
<dbReference type="InterPro" id="IPR011009">
    <property type="entry name" value="Kinase-like_dom_sf"/>
</dbReference>
<dbReference type="InterPro" id="IPR000719">
    <property type="entry name" value="Prot_kinase_dom"/>
</dbReference>
<dbReference type="InterPro" id="IPR008271">
    <property type="entry name" value="Ser/Thr_kinase_AS"/>
</dbReference>
<dbReference type="PANTHER" id="PTHR24056">
    <property type="entry name" value="CELL DIVISION PROTEIN KINASE"/>
    <property type="match status" value="1"/>
</dbReference>
<dbReference type="PANTHER" id="PTHR24056:SF495">
    <property type="entry name" value="CYCLIN-DEPENDENT KINASE 8-RELATED"/>
    <property type="match status" value="1"/>
</dbReference>
<dbReference type="Pfam" id="PF00069">
    <property type="entry name" value="Pkinase"/>
    <property type="match status" value="1"/>
</dbReference>
<dbReference type="SMART" id="SM00220">
    <property type="entry name" value="S_TKc"/>
    <property type="match status" value="1"/>
</dbReference>
<dbReference type="SUPFAM" id="SSF56112">
    <property type="entry name" value="Protein kinase-like (PK-like)"/>
    <property type="match status" value="1"/>
</dbReference>
<dbReference type="PROSITE" id="PS50011">
    <property type="entry name" value="PROTEIN_KINASE_DOM"/>
    <property type="match status" value="1"/>
</dbReference>
<dbReference type="PROSITE" id="PS00108">
    <property type="entry name" value="PROTEIN_KINASE_ST"/>
    <property type="match status" value="1"/>
</dbReference>
<sequence length="431" mass="49251">MASNSILTLGPFKHRKDLTRESVLSTYQIIGYIAAGTYGKVYKAKLKNTASAEQLFAIKKFKSDNHSSNRSHHNHDINGNEIVHYTGISQSAIREMSLCRELNNKNITKLVDIILENKSIYMIFEFCEHDLLQIIHYHSHPEVKPIPQATVKSLIWQILNGVTFLHQNWIFHRDLKPANIMVSSSGVVKIGDLGLARKFNNPLQSLYTGDKVVVTIWYRAPELLLGARHYTPAIDLWAVGCILAELLSLRPIFKGEEAKIDINNKKSVPFQKNQFQKIVEVLGTPSMKNWPALNKYPEFISFQQQLTTNYPPNLVNWYKMIGSSNKQCLELLKGLLEYDPLVRLTADNALVHPYFLELPKVQENAFEGLNLKYPKRRIYTDDNDIISNQAINQNFKRHGGAYDDQHNNSNNNTNNSLNANNANNVPRKRAR</sequence>